<feature type="chain" id="PRO_1000062726" description="UDP-N-acetyl-D-mannosaminuronic acid transferase">
    <location>
        <begin position="1"/>
        <end position="246"/>
    </location>
</feature>
<dbReference type="EC" id="2.4.1.180" evidence="1"/>
<dbReference type="EMBL" id="CP000802">
    <property type="protein sequence ID" value="ABV08204.1"/>
    <property type="molecule type" value="Genomic_DNA"/>
</dbReference>
<dbReference type="RefSeq" id="WP_001064025.1">
    <property type="nucleotide sequence ID" value="NC_009800.1"/>
</dbReference>
<dbReference type="SMR" id="A8A6Q0"/>
<dbReference type="CAZy" id="GT26">
    <property type="family name" value="Glycosyltransferase Family 26"/>
</dbReference>
<dbReference type="KEGG" id="ecx:EcHS_A4012"/>
<dbReference type="HOGENOM" id="CLU_063203_3_2_6"/>
<dbReference type="UniPathway" id="UPA00566"/>
<dbReference type="GO" id="GO:0047241">
    <property type="term" value="F:lipopolysaccharide N-acetylmannosaminouronosyltransferase activity"/>
    <property type="evidence" value="ECO:0007669"/>
    <property type="project" value="UniProtKB-UniRule"/>
</dbReference>
<dbReference type="GO" id="GO:0009246">
    <property type="term" value="P:enterobacterial common antigen biosynthetic process"/>
    <property type="evidence" value="ECO:0007669"/>
    <property type="project" value="UniProtKB-UniRule"/>
</dbReference>
<dbReference type="CDD" id="cd06533">
    <property type="entry name" value="Glyco_transf_WecG_TagA"/>
    <property type="match status" value="1"/>
</dbReference>
<dbReference type="HAMAP" id="MF_01001">
    <property type="entry name" value="WecG_RffM"/>
    <property type="match status" value="1"/>
</dbReference>
<dbReference type="InterPro" id="IPR023085">
    <property type="entry name" value="UDP-ManNAcA_Trfase_WecG"/>
</dbReference>
<dbReference type="InterPro" id="IPR004629">
    <property type="entry name" value="WecG_TagA_CpsF"/>
</dbReference>
<dbReference type="NCBIfam" id="NF002980">
    <property type="entry name" value="PRK03692.1"/>
    <property type="match status" value="1"/>
</dbReference>
<dbReference type="NCBIfam" id="TIGR00696">
    <property type="entry name" value="wecG_tagA_cpsF"/>
    <property type="match status" value="1"/>
</dbReference>
<dbReference type="PANTHER" id="PTHR34136">
    <property type="match status" value="1"/>
</dbReference>
<dbReference type="PANTHER" id="PTHR34136:SF1">
    <property type="entry name" value="UDP-N-ACETYL-D-MANNOSAMINURONIC ACID TRANSFERASE"/>
    <property type="match status" value="1"/>
</dbReference>
<dbReference type="Pfam" id="PF03808">
    <property type="entry name" value="Glyco_tran_WecG"/>
    <property type="match status" value="1"/>
</dbReference>
<comment type="function">
    <text evidence="1">Catalyzes the synthesis of Und-PP-GlcNAc-ManNAcA (Lipid II), the second lipid-linked intermediate involved in enterobacterial common antigen (ECA) synthesis.</text>
</comment>
<comment type="catalytic activity">
    <reaction evidence="1">
        <text>UDP-N-acetyl-alpha-D-mannosaminouronate + N-acetyl-alpha-D-glucosaminyl-di-trans,octa-cis-undecaprenyl diphosphate = beta-D-ManNAcA-(1-&gt;4)-alpha-D-GlcNAc-di-trans,octa-cis-undecaprenyl diphosphate + UDP + H(+)</text>
        <dbReference type="Rhea" id="RHEA:28366"/>
        <dbReference type="ChEBI" id="CHEBI:15378"/>
        <dbReference type="ChEBI" id="CHEBI:58223"/>
        <dbReference type="ChEBI" id="CHEBI:61495"/>
        <dbReference type="ChEBI" id="CHEBI:62959"/>
        <dbReference type="ChEBI" id="CHEBI:70731"/>
        <dbReference type="EC" id="2.4.1.180"/>
    </reaction>
</comment>
<comment type="pathway">
    <text evidence="1">Bacterial outer membrane biogenesis; enterobacterial common antigen biosynthesis.</text>
</comment>
<comment type="similarity">
    <text evidence="1">Belongs to the glycosyltransferase 26 family.</text>
</comment>
<organism>
    <name type="scientific">Escherichia coli O9:H4 (strain HS)</name>
    <dbReference type="NCBI Taxonomy" id="331112"/>
    <lineage>
        <taxon>Bacteria</taxon>
        <taxon>Pseudomonadati</taxon>
        <taxon>Pseudomonadota</taxon>
        <taxon>Gammaproteobacteria</taxon>
        <taxon>Enterobacterales</taxon>
        <taxon>Enterobacteriaceae</taxon>
        <taxon>Escherichia</taxon>
    </lineage>
</organism>
<reference key="1">
    <citation type="journal article" date="2008" name="J. Bacteriol.">
        <title>The pangenome structure of Escherichia coli: comparative genomic analysis of E. coli commensal and pathogenic isolates.</title>
        <authorList>
            <person name="Rasko D.A."/>
            <person name="Rosovitz M.J."/>
            <person name="Myers G.S.A."/>
            <person name="Mongodin E.F."/>
            <person name="Fricke W.F."/>
            <person name="Gajer P."/>
            <person name="Crabtree J."/>
            <person name="Sebaihia M."/>
            <person name="Thomson N.R."/>
            <person name="Chaudhuri R."/>
            <person name="Henderson I.R."/>
            <person name="Sperandio V."/>
            <person name="Ravel J."/>
        </authorList>
    </citation>
    <scope>NUCLEOTIDE SEQUENCE [LARGE SCALE GENOMIC DNA]</scope>
    <source>
        <strain>HS</strain>
    </source>
</reference>
<name>WECG_ECOHS</name>
<proteinExistence type="inferred from homology"/>
<sequence length="246" mass="27971">MNNNTTAPTYTLRGLQLIGWRDMQHALDYLFADGHLKQGTLVAINAEKMLTIEDNAEVRELINAAEFKYADGISVVRSVRKKYPQAQVSRVAGADLWEELMARAGKEGTPVFLVGGKPEVLAQTEAKLRNQWNVNIVGSQDGYFKPEQRQALFERIHASGAQIVTVAMGSPKQEIFMRDCRLVHPDALYMGVGGTYDVFTGHVKRAPKIWQTLGLEWLYRLLSQPSRIKRQLRLLRYLRWHYTGNL</sequence>
<protein>
    <recommendedName>
        <fullName evidence="1">UDP-N-acetyl-D-mannosaminuronic acid transferase</fullName>
        <shortName evidence="1">UDP-ManNAcA transferase</shortName>
        <ecNumber evidence="1">2.4.1.180</ecNumber>
    </recommendedName>
</protein>
<evidence type="ECO:0000255" key="1">
    <source>
        <dbReference type="HAMAP-Rule" id="MF_01001"/>
    </source>
</evidence>
<accession>A8A6Q0</accession>
<keyword id="KW-0328">Glycosyltransferase</keyword>
<keyword id="KW-0808">Transferase</keyword>
<gene>
    <name evidence="1" type="primary">wecG</name>
    <name evidence="1" type="synonym">rffM</name>
    <name type="ordered locus">EcHS_A4012</name>
</gene>